<comment type="function">
    <text evidence="1">Implicated in development of the cochlea.</text>
</comment>
<comment type="similarity">
    <text evidence="2">Belongs to the SOBP family.</text>
</comment>
<name>SOBP_CHICK</name>
<evidence type="ECO:0000250" key="1">
    <source>
        <dbReference type="UniProtKB" id="Q0P5V2"/>
    </source>
</evidence>
<evidence type="ECO:0000255" key="2"/>
<evidence type="ECO:0000256" key="3">
    <source>
        <dbReference type="SAM" id="MobiDB-lite"/>
    </source>
</evidence>
<evidence type="ECO:0000312" key="4">
    <source>
        <dbReference type="EMBL" id="ABF56055.1"/>
    </source>
</evidence>
<dbReference type="EMBL" id="DQ503407">
    <property type="protein sequence ID" value="ABF56055.1"/>
    <property type="molecule type" value="mRNA"/>
</dbReference>
<dbReference type="RefSeq" id="NP_001103647.1">
    <property type="nucleotide sequence ID" value="NM_001110177.1"/>
</dbReference>
<dbReference type="RefSeq" id="NP_001385023.1">
    <property type="nucleotide sequence ID" value="NM_001398094.1"/>
</dbReference>
<dbReference type="RefSeq" id="XP_015140000.1">
    <property type="nucleotide sequence ID" value="XM_015284514.1"/>
</dbReference>
<dbReference type="FunCoup" id="A7XYH5">
    <property type="interactions" value="244"/>
</dbReference>
<dbReference type="STRING" id="9031.ENSGALP00000054799"/>
<dbReference type="GlyGen" id="A7XYH5">
    <property type="glycosylation" value="1 site"/>
</dbReference>
<dbReference type="PaxDb" id="9031-ENSGALP00000024667"/>
<dbReference type="Ensembl" id="ENSGALT00010029853.1">
    <property type="protein sequence ID" value="ENSGALP00010017383.1"/>
    <property type="gene ID" value="ENSGALG00010012445.1"/>
</dbReference>
<dbReference type="GeneID" id="421775"/>
<dbReference type="KEGG" id="gga:421775"/>
<dbReference type="VEuPathDB" id="HostDB:geneid_421775"/>
<dbReference type="eggNOG" id="ENOG502QZ8A">
    <property type="taxonomic scope" value="Eukaryota"/>
</dbReference>
<dbReference type="GeneTree" id="ENSGT00940000154164"/>
<dbReference type="HOGENOM" id="CLU_012732_0_0_1"/>
<dbReference type="InParanoid" id="A7XYH5"/>
<dbReference type="OMA" id="MAPCVIS"/>
<dbReference type="OrthoDB" id="6250723at2759"/>
<dbReference type="PhylomeDB" id="A7XYH5"/>
<dbReference type="PRO" id="PR:A7XYH5"/>
<dbReference type="Proteomes" id="UP000000539">
    <property type="component" value="Chromosome 3"/>
</dbReference>
<dbReference type="Bgee" id="ENSGALG00000043047">
    <property type="expression patterns" value="Expressed in cerebellum and 12 other cell types or tissues"/>
</dbReference>
<dbReference type="GO" id="GO:0005634">
    <property type="term" value="C:nucleus"/>
    <property type="evidence" value="ECO:0000318"/>
    <property type="project" value="GO_Central"/>
</dbReference>
<dbReference type="GO" id="GO:0032184">
    <property type="term" value="F:SUMO polymer binding"/>
    <property type="evidence" value="ECO:0007669"/>
    <property type="project" value="Ensembl"/>
</dbReference>
<dbReference type="GO" id="GO:0008270">
    <property type="term" value="F:zinc ion binding"/>
    <property type="evidence" value="ECO:0007669"/>
    <property type="project" value="UniProtKB-KW"/>
</dbReference>
<dbReference type="GO" id="GO:0048513">
    <property type="term" value="P:animal organ development"/>
    <property type="evidence" value="ECO:0000318"/>
    <property type="project" value="GO_Central"/>
</dbReference>
<dbReference type="GO" id="GO:0090102">
    <property type="term" value="P:cochlea development"/>
    <property type="evidence" value="ECO:0007669"/>
    <property type="project" value="Ensembl"/>
</dbReference>
<dbReference type="GO" id="GO:0050890">
    <property type="term" value="P:cognition"/>
    <property type="evidence" value="ECO:0007669"/>
    <property type="project" value="Ensembl"/>
</dbReference>
<dbReference type="GO" id="GO:0042472">
    <property type="term" value="P:inner ear morphogenesis"/>
    <property type="evidence" value="ECO:0000318"/>
    <property type="project" value="GO_Central"/>
</dbReference>
<dbReference type="GO" id="GO:0007626">
    <property type="term" value="P:locomotory behavior"/>
    <property type="evidence" value="ECO:0007669"/>
    <property type="project" value="Ensembl"/>
</dbReference>
<dbReference type="GO" id="GO:0007605">
    <property type="term" value="P:sensory perception of sound"/>
    <property type="evidence" value="ECO:0007669"/>
    <property type="project" value="Ensembl"/>
</dbReference>
<dbReference type="InterPro" id="IPR026092">
    <property type="entry name" value="RAI2/SOBP"/>
</dbReference>
<dbReference type="PANTHER" id="PTHR23186">
    <property type="entry name" value="RETINOIC ACID-INDUCED PROTEIN 2"/>
    <property type="match status" value="1"/>
</dbReference>
<dbReference type="PANTHER" id="PTHR23186:SF2">
    <property type="entry name" value="SINE OCULIS-BINDING PROTEIN HOMOLOG"/>
    <property type="match status" value="1"/>
</dbReference>
<dbReference type="Pfam" id="PF15279">
    <property type="entry name" value="SOBP"/>
    <property type="match status" value="1"/>
</dbReference>
<protein>
    <recommendedName>
        <fullName>Sine oculis-binding protein homolog</fullName>
    </recommendedName>
    <alternativeName>
        <fullName>Jackson circler protein 1</fullName>
    </alternativeName>
</protein>
<proteinExistence type="evidence at transcript level"/>
<sequence length="873" mass="94058">MAEMEKEGRPPENKRSRKPAHPVKREINEEMKNFAENTMNELLGWYGYDKVELKDGEDIEFRNYSADGESRQHISVLKENSLPKPKLPEDSVISPYNINTSYPGLATGNGLSDSPAGSKDHGNVPIIVPLIPPPFIKPPAEDDVSNVQIMCAWCQKVGIKRYSLSMGSEVKCFCSEKCFAACRRAYFKRNKARDEDGHAENFPQQHYAKETPRLAFKNNCELLVCDWCKHIRHTKEYLDFGDGERRLQFCSAKCLNQYKMDIFYKETQANLPAGLCSTLHPPVENKAEGTGVQLLTPDSWNIPLADARRKAPSPASAAGQIQGPGPSASTTASPSDTANCSVTKIPTPVPKPIPISENPNIPPVSVQPPASIVPPIGVPPRSPPMVMTNRGPVPLPIFMEQQIMQQIRPPFIRGPPHHASNPNSPLSNPMIPGIGPPPGGPRNMGPTSSPMHRPMLSPHIHPPTTPTMPGNPPGLLPPPPPGAPLPSLPFPPVSMMPNGPMPMPQMMNFGLPSLAPLVPPPTLLVPYPVIVPLPVPIPIPIPIPHINDSKPPSGFSSNGENFIPSNSSETPGGKPPNSSSSPRESKQGSSKPSDSSPSCSGQSLNQAQVLQEHSKNEVVDLTVRPSSPVNSKFGFPSVLQGPQDGVIDLTVGHRSRLHNVIHRALHAQVKVEREPNSVVNLAFGSSDKRNCSDCRDNCSPVDSKTLPCGDAAHCCPVSLASGTPGLEAGAAVCNVIVNGTKSTEGSKNPEPPQDPKKPQPPEELAVSELESVKENNCASNCHLEGDTGKKAGEEPLAGGDKQDPNLNNPADEDHAYALRMLPKTGCVIQPVPKPAEKTAIAPCIMSTPILSTGPEDLEPPLKRRCLRIRNQNK</sequence>
<reference evidence="4" key="1">
    <citation type="submission" date="2006-04" db="EMBL/GenBank/DDBJ databases">
        <title>Mutations in Jxc1 are associated with deafness, vestibular deficits and cochlea malformation in the Jackson circler (jc) mutant mouse.</title>
        <authorList>
            <person name="Noben-Trauth K."/>
        </authorList>
    </citation>
    <scope>NUCLEOTIDE SEQUENCE [MRNA]</scope>
</reference>
<organism>
    <name type="scientific">Gallus gallus</name>
    <name type="common">Chicken</name>
    <dbReference type="NCBI Taxonomy" id="9031"/>
    <lineage>
        <taxon>Eukaryota</taxon>
        <taxon>Metazoa</taxon>
        <taxon>Chordata</taxon>
        <taxon>Craniata</taxon>
        <taxon>Vertebrata</taxon>
        <taxon>Euteleostomi</taxon>
        <taxon>Archelosauria</taxon>
        <taxon>Archosauria</taxon>
        <taxon>Dinosauria</taxon>
        <taxon>Saurischia</taxon>
        <taxon>Theropoda</taxon>
        <taxon>Coelurosauria</taxon>
        <taxon>Aves</taxon>
        <taxon>Neognathae</taxon>
        <taxon>Galloanserae</taxon>
        <taxon>Galliformes</taxon>
        <taxon>Phasianidae</taxon>
        <taxon>Phasianinae</taxon>
        <taxon>Gallus</taxon>
    </lineage>
</organism>
<gene>
    <name evidence="1" type="primary">SOBP</name>
    <name evidence="4" type="synonym">JXC1</name>
</gene>
<accession>A7XYH5</accession>
<keyword id="KW-0479">Metal-binding</keyword>
<keyword id="KW-1185">Reference proteome</keyword>
<keyword id="KW-0677">Repeat</keyword>
<keyword id="KW-0862">Zinc</keyword>
<keyword id="KW-0863">Zinc-finger</keyword>
<feature type="chain" id="PRO_0000312235" description="Sine oculis-binding protein homolog">
    <location>
        <begin position="1"/>
        <end position="873"/>
    </location>
</feature>
<feature type="zinc finger region" description="FCS-type 1" evidence="2">
    <location>
        <begin position="142"/>
        <end position="180"/>
    </location>
</feature>
<feature type="zinc finger region" description="FCS-type 2" evidence="2">
    <location>
        <begin position="216"/>
        <end position="256"/>
    </location>
</feature>
<feature type="region of interest" description="Disordered" evidence="3">
    <location>
        <begin position="1"/>
        <end position="26"/>
    </location>
</feature>
<feature type="region of interest" description="Disordered" evidence="3">
    <location>
        <begin position="307"/>
        <end position="338"/>
    </location>
</feature>
<feature type="region of interest" description="Disordered" evidence="3">
    <location>
        <begin position="413"/>
        <end position="485"/>
    </location>
</feature>
<feature type="region of interest" description="Disordered" evidence="3">
    <location>
        <begin position="550"/>
        <end position="608"/>
    </location>
</feature>
<feature type="region of interest" description="Disordered" evidence="3">
    <location>
        <begin position="742"/>
        <end position="766"/>
    </location>
</feature>
<feature type="region of interest" description="Disordered" evidence="3">
    <location>
        <begin position="779"/>
        <end position="811"/>
    </location>
</feature>
<feature type="compositionally biased region" description="Basic and acidic residues" evidence="3">
    <location>
        <begin position="1"/>
        <end position="14"/>
    </location>
</feature>
<feature type="compositionally biased region" description="Low complexity" evidence="3">
    <location>
        <begin position="312"/>
        <end position="338"/>
    </location>
</feature>
<feature type="compositionally biased region" description="Pro residues" evidence="3">
    <location>
        <begin position="460"/>
        <end position="485"/>
    </location>
</feature>
<feature type="compositionally biased region" description="Polar residues" evidence="3">
    <location>
        <begin position="554"/>
        <end position="570"/>
    </location>
</feature>
<feature type="compositionally biased region" description="Low complexity" evidence="3">
    <location>
        <begin position="571"/>
        <end position="603"/>
    </location>
</feature>
<feature type="compositionally biased region" description="Basic and acidic residues" evidence="3">
    <location>
        <begin position="783"/>
        <end position="793"/>
    </location>
</feature>